<dbReference type="PIR" id="A00064">
    <property type="entry name" value="CCFA"/>
</dbReference>
<dbReference type="iPTMnet" id="P00072"/>
<dbReference type="GO" id="GO:0005758">
    <property type="term" value="C:mitochondrial intermembrane space"/>
    <property type="evidence" value="ECO:0007669"/>
    <property type="project" value="UniProtKB-SubCell"/>
</dbReference>
<dbReference type="GO" id="GO:0009055">
    <property type="term" value="F:electron transfer activity"/>
    <property type="evidence" value="ECO:0007669"/>
    <property type="project" value="InterPro"/>
</dbReference>
<dbReference type="GO" id="GO:0020037">
    <property type="term" value="F:heme binding"/>
    <property type="evidence" value="ECO:0007669"/>
    <property type="project" value="InterPro"/>
</dbReference>
<dbReference type="GO" id="GO:0046872">
    <property type="term" value="F:metal ion binding"/>
    <property type="evidence" value="ECO:0007669"/>
    <property type="project" value="UniProtKB-KW"/>
</dbReference>
<dbReference type="FunFam" id="1.10.760.10:FF:000001">
    <property type="entry name" value="Cytochrome c iso-1"/>
    <property type="match status" value="1"/>
</dbReference>
<dbReference type="Gene3D" id="1.10.760.10">
    <property type="entry name" value="Cytochrome c-like domain"/>
    <property type="match status" value="1"/>
</dbReference>
<dbReference type="InterPro" id="IPR009056">
    <property type="entry name" value="Cyt_c-like_dom"/>
</dbReference>
<dbReference type="InterPro" id="IPR036909">
    <property type="entry name" value="Cyt_c-like_dom_sf"/>
</dbReference>
<dbReference type="InterPro" id="IPR002327">
    <property type="entry name" value="Cyt_c_1A/1B"/>
</dbReference>
<dbReference type="PANTHER" id="PTHR11961">
    <property type="entry name" value="CYTOCHROME C"/>
    <property type="match status" value="1"/>
</dbReference>
<dbReference type="Pfam" id="PF00034">
    <property type="entry name" value="Cytochrom_C"/>
    <property type="match status" value="1"/>
</dbReference>
<dbReference type="PRINTS" id="PR00604">
    <property type="entry name" value="CYTCHRMECIAB"/>
</dbReference>
<dbReference type="SUPFAM" id="SSF46626">
    <property type="entry name" value="Cytochrome c"/>
    <property type="match status" value="1"/>
</dbReference>
<dbReference type="PROSITE" id="PS51007">
    <property type="entry name" value="CYTC"/>
    <property type="match status" value="1"/>
</dbReference>
<organism>
    <name type="scientific">Fagopyrum esculentum</name>
    <name type="common">Common buckwheat</name>
    <name type="synonym">Polygonum fagopyrum</name>
    <dbReference type="NCBI Taxonomy" id="3617"/>
    <lineage>
        <taxon>Eukaryota</taxon>
        <taxon>Viridiplantae</taxon>
        <taxon>Streptophyta</taxon>
        <taxon>Embryophyta</taxon>
        <taxon>Tracheophyta</taxon>
        <taxon>Spermatophyta</taxon>
        <taxon>Magnoliopsida</taxon>
        <taxon>eudicotyledons</taxon>
        <taxon>Gunneridae</taxon>
        <taxon>Pentapetalae</taxon>
        <taxon>Caryophyllales</taxon>
        <taxon>Polygonaceae</taxon>
        <taxon>Polygonoideae</taxon>
        <taxon>Fagopyreae</taxon>
        <taxon>Fagopyrum</taxon>
    </lineage>
</organism>
<evidence type="ECO:0000269" key="1">
    <source>
    </source>
</evidence>
<evidence type="ECO:0000305" key="2"/>
<feature type="chain" id="PRO_0000108294" description="Cytochrome c">
    <location>
        <begin position="1"/>
        <end position="111"/>
    </location>
</feature>
<feature type="binding site" description="covalent">
    <location>
        <position position="22"/>
    </location>
    <ligand>
        <name>heme c</name>
        <dbReference type="ChEBI" id="CHEBI:61717"/>
    </ligand>
</feature>
<feature type="binding site" description="covalent">
    <location>
        <position position="25"/>
    </location>
    <ligand>
        <name>heme c</name>
        <dbReference type="ChEBI" id="CHEBI:61717"/>
    </ligand>
</feature>
<feature type="binding site" description="axial binding residue">
    <location>
        <position position="26"/>
    </location>
    <ligand>
        <name>heme c</name>
        <dbReference type="ChEBI" id="CHEBI:61717"/>
    </ligand>
    <ligandPart>
        <name>Fe</name>
        <dbReference type="ChEBI" id="CHEBI:18248"/>
    </ligandPart>
</feature>
<feature type="binding site" description="axial binding residue">
    <location>
        <position position="88"/>
    </location>
    <ligand>
        <name>heme c</name>
        <dbReference type="ChEBI" id="CHEBI:61717"/>
    </ligand>
    <ligandPart>
        <name>Fe</name>
        <dbReference type="ChEBI" id="CHEBI:18248"/>
    </ligandPart>
</feature>
<feature type="modified residue" description="N-acetylalanine" evidence="1">
    <location>
        <position position="1"/>
    </location>
</feature>
<feature type="modified residue" description="N6,N6,N6-trimethyllysine" evidence="1">
    <location>
        <position position="80"/>
    </location>
</feature>
<feature type="modified residue" description="N6,N6,N6-trimethyllysine" evidence="1">
    <location>
        <position position="94"/>
    </location>
</feature>
<proteinExistence type="evidence at protein level"/>
<sequence>ATFSEAPPGNIKSGEKIFKTKCAQCHTVEKGAGHKQGPNLNGLFGRQSGTTAGYSYSAANKNKAVTWGEDTLYEYLLNPKKYIPGTKMVFPGLKKPQERADLIAYLKBSTZ</sequence>
<keyword id="KW-0007">Acetylation</keyword>
<keyword id="KW-0903">Direct protein sequencing</keyword>
<keyword id="KW-0249">Electron transport</keyword>
<keyword id="KW-0349">Heme</keyword>
<keyword id="KW-0408">Iron</keyword>
<keyword id="KW-0479">Metal-binding</keyword>
<keyword id="KW-0488">Methylation</keyword>
<keyword id="KW-0496">Mitochondrion</keyword>
<keyword id="KW-0679">Respiratory chain</keyword>
<keyword id="KW-0813">Transport</keyword>
<accession>P00072</accession>
<protein>
    <recommendedName>
        <fullName>Cytochrome c</fullName>
    </recommendedName>
</protein>
<reference key="1">
    <citation type="journal article" date="1971" name="Biochem. J.">
        <title>The amino acid sequence of cytochrome c of Fagopyrum esculentum Moench (buckwheat) and Brassica oleracea L. (cauliflower).</title>
        <authorList>
            <person name="Thompson E.W."/>
            <person name="Richardson M."/>
            <person name="Boulter D."/>
        </authorList>
    </citation>
    <scope>PROTEIN SEQUENCE</scope>
    <scope>ACETYLATION AT ALA-1</scope>
    <scope>METHYLATION AT LYS-80 AND LYS-94</scope>
</reference>
<comment type="function">
    <text>Electron carrier protein. The oxidized form of the cytochrome c heme group can accept an electron from the heme group of the cytochrome c1 subunit of cytochrome reductase. Cytochrome c then transfers this electron to the cytochrome oxidase complex, the final protein carrier in the mitochondrial electron-transport chain.</text>
</comment>
<comment type="subcellular location">
    <subcellularLocation>
        <location>Mitochondrion intermembrane space</location>
    </subcellularLocation>
    <text>Loosely associated with the inner membrane.</text>
</comment>
<comment type="PTM">
    <text>Binds 1 heme c group covalently per subunit.</text>
</comment>
<comment type="miscellaneous">
    <text>The authors placed the amides at positions 10, 24, and 97 by homology with other cytochromes c. There is one amide at position 108 or 111.</text>
</comment>
<comment type="similarity">
    <text evidence="2">Belongs to the cytochrome c family.</text>
</comment>
<comment type="online information" name="Protein Spotlight">
    <link uri="https://www.proteinspotlight.org/back_issues/076"/>
    <text>Life shuttle - Issue 76 of November 2006</text>
</comment>
<name>CYC_FAGES</name>